<accession>O35343</accession>
<gene>
    <name type="primary">Kpna4</name>
    <name type="synonym">Qip1</name>
</gene>
<reference key="1">
    <citation type="journal article" date="1997" name="FEBS Lett.">
        <title>Identification of novel homologues of mouse importin alpha, the alpha subunit of the nuclear pore-targeting complex, and their tissue-specific expression.</title>
        <authorList>
            <person name="Tsuji L."/>
            <person name="Takumi T."/>
            <person name="Imamoto N."/>
            <person name="Yoneda Y."/>
        </authorList>
    </citation>
    <scope>NUCLEOTIDE SEQUENCE [MRNA]</scope>
    <scope>TISSUE SPECIFICITY</scope>
</reference>
<reference key="2">
    <citation type="journal article" date="2004" name="Genome Res.">
        <title>The status, quality, and expansion of the NIH full-length cDNA project: the Mammalian Gene Collection (MGC).</title>
        <authorList>
            <consortium name="The MGC Project Team"/>
        </authorList>
    </citation>
    <scope>NUCLEOTIDE SEQUENCE [LARGE SCALE MRNA]</scope>
    <source>
        <strain>FVB/N</strain>
        <tissue>Limb</tissue>
        <tissue>Mammary gland</tissue>
    </source>
</reference>
<reference key="3">
    <citation type="journal article" date="2007" name="Proc. Natl. Acad. Sci. U.S.A.">
        <title>Large-scale phosphorylation analysis of mouse liver.</title>
        <authorList>
            <person name="Villen J."/>
            <person name="Beausoleil S.A."/>
            <person name="Gerber S.A."/>
            <person name="Gygi S.P."/>
        </authorList>
    </citation>
    <scope>PHOSPHORYLATION [LARGE SCALE ANALYSIS] AT SER-60</scope>
    <scope>IDENTIFICATION BY MASS SPECTROMETRY [LARGE SCALE ANALYSIS]</scope>
    <source>
        <tissue>Liver</tissue>
    </source>
</reference>
<reference key="4">
    <citation type="journal article" date="2010" name="Cell">
        <title>A tissue-specific atlas of mouse protein phosphorylation and expression.</title>
        <authorList>
            <person name="Huttlin E.L."/>
            <person name="Jedrychowski M.P."/>
            <person name="Elias J.E."/>
            <person name="Goswami T."/>
            <person name="Rad R."/>
            <person name="Beausoleil S.A."/>
            <person name="Villen J."/>
            <person name="Haas W."/>
            <person name="Sowa M.E."/>
            <person name="Gygi S.P."/>
        </authorList>
    </citation>
    <scope>PHOSPHORYLATION [LARGE SCALE ANALYSIS] AT SER-60</scope>
    <scope>IDENTIFICATION BY MASS SPECTROMETRY [LARGE SCALE ANALYSIS]</scope>
    <source>
        <tissue>Brain</tissue>
        <tissue>Brown adipose tissue</tissue>
        <tissue>Heart</tissue>
        <tissue>Kidney</tissue>
        <tissue>Liver</tissue>
        <tissue>Lung</tissue>
        <tissue>Pancreas</tissue>
        <tissue>Spleen</tissue>
        <tissue>Testis</tissue>
    </source>
</reference>
<reference key="5">
    <citation type="journal article" date="2016" name="Sci. Rep.">
        <title>Two isoforms of TALDO1 generated by alternative translational initiation show differential nucleocytoplasmic distribution to regulate the global metabolic network.</title>
        <authorList>
            <person name="Moriyama T."/>
            <person name="Tanaka S."/>
            <person name="Nakayama Y."/>
            <person name="Fukumoto M."/>
            <person name="Tsujimura K."/>
            <person name="Yamada K."/>
            <person name="Bamba T."/>
            <person name="Yoneda Y."/>
            <person name="Fukusaki E."/>
            <person name="Oka M."/>
        </authorList>
    </citation>
    <scope>INTERACTION WITH TALDO1</scope>
</reference>
<name>IMA3_MOUSE</name>
<proteinExistence type="evidence at protein level"/>
<evidence type="ECO:0000250" key="1">
    <source>
        <dbReference type="UniProtKB" id="O00629"/>
    </source>
</evidence>
<evidence type="ECO:0000255" key="2">
    <source>
        <dbReference type="PROSITE-ProRule" id="PRU00561"/>
    </source>
</evidence>
<evidence type="ECO:0000269" key="3">
    <source>
    </source>
</evidence>
<evidence type="ECO:0000269" key="4">
    <source>
    </source>
</evidence>
<evidence type="ECO:0000305" key="5"/>
<evidence type="ECO:0007744" key="6">
    <source>
    </source>
</evidence>
<evidence type="ECO:0007744" key="7">
    <source>
    </source>
</evidence>
<feature type="initiator methionine" description="Removed" evidence="1">
    <location>
        <position position="1"/>
    </location>
</feature>
<feature type="chain" id="PRO_0000120727" description="Importin subunit alpha-3">
    <location>
        <begin position="2"/>
        <end position="521"/>
    </location>
</feature>
<feature type="domain" description="IBB" evidence="2">
    <location>
        <begin position="2"/>
        <end position="58"/>
    </location>
</feature>
<feature type="repeat" description="ARM 1; truncated">
    <location>
        <begin position="66"/>
        <end position="106"/>
    </location>
</feature>
<feature type="repeat" description="ARM 2">
    <location>
        <begin position="107"/>
        <end position="149"/>
    </location>
</feature>
<feature type="repeat" description="ARM 3">
    <location>
        <begin position="150"/>
        <end position="194"/>
    </location>
</feature>
<feature type="repeat" description="ARM 4">
    <location>
        <begin position="195"/>
        <end position="233"/>
    </location>
</feature>
<feature type="repeat" description="ARM 5">
    <location>
        <begin position="234"/>
        <end position="278"/>
    </location>
</feature>
<feature type="repeat" description="ARM 6">
    <location>
        <begin position="279"/>
        <end position="318"/>
    </location>
</feature>
<feature type="repeat" description="ARM 7">
    <location>
        <begin position="319"/>
        <end position="360"/>
    </location>
</feature>
<feature type="repeat" description="ARM 8">
    <location>
        <begin position="361"/>
        <end position="400"/>
    </location>
</feature>
<feature type="repeat" description="ARM 9">
    <location>
        <begin position="401"/>
        <end position="443"/>
    </location>
</feature>
<feature type="repeat" description="ARM 10; atypical">
    <location>
        <begin position="447"/>
        <end position="485"/>
    </location>
</feature>
<feature type="region of interest" description="NLS binding site (major)" evidence="1">
    <location>
        <begin position="137"/>
        <end position="229"/>
    </location>
</feature>
<feature type="region of interest" description="NLS binding site (minor)" evidence="1">
    <location>
        <begin position="306"/>
        <end position="394"/>
    </location>
</feature>
<feature type="short sequence motif" description="Nuclear localization signal" evidence="1">
    <location>
        <begin position="43"/>
        <end position="52"/>
    </location>
</feature>
<feature type="modified residue" description="N-acetylalanine" evidence="1">
    <location>
        <position position="2"/>
    </location>
</feature>
<feature type="modified residue" description="Phosphoserine" evidence="6 7">
    <location>
        <position position="60"/>
    </location>
</feature>
<protein>
    <recommendedName>
        <fullName>Importin subunit alpha-3</fullName>
    </recommendedName>
    <alternativeName>
        <fullName>Importin alpha Q1</fullName>
        <shortName>Qip1</shortName>
    </alternativeName>
    <alternativeName>
        <fullName>Karyopherin subunit alpha-4</fullName>
    </alternativeName>
</protein>
<keyword id="KW-0007">Acetylation</keyword>
<keyword id="KW-0963">Cytoplasm</keyword>
<keyword id="KW-0539">Nucleus</keyword>
<keyword id="KW-0597">Phosphoprotein</keyword>
<keyword id="KW-0653">Protein transport</keyword>
<keyword id="KW-1185">Reference proteome</keyword>
<keyword id="KW-0677">Repeat</keyword>
<keyword id="KW-0813">Transport</keyword>
<sequence>MADNEKLDNQRLKNFKNKGRDLETMRRQRNEVVVELRKNKRDEHLLKRRNVPQEDICEDSDIDGDYRVQNTSLEAIVQNASSDNQGIQLSAVQAARKLLSSDRNPPIDDLIKSGILPILVHCLERDDNPSLQFEAAWALTNIASGTSEQTQAVVQSNAVPLFLRLLHSPHQNVCEQAVWALGNIIGDGPQCRDYVISLGVVKPLLSFISPSIPITFLRNVTWVMVNLCRHKDPPPPMETIQEILPALCVLIHHTDVNILVDTVWALSYLTDAGNEQIQMVIDSGIVPHLVPLLSHQEVKVQTAALRAVGNIVTGTDEQTQVVLNCDALSHFPALLTHPKEKINKEAVWFLSNITAGNQQQVQAVIDANLVPMIIHLLDKGDFGTQKEAAWAISNLTISGRKDQVAYLIQQNVIPPFCNLLTVKDAQVVQVVLDGLSNILKMAEDQAETIANLIEECGGLEKIEQLQNHENEDIYKLAYEIIDQFFSSDDIDEDPSLVPESVQGGTFGFNSSTNVPTEGFQF</sequence>
<comment type="function">
    <text evidence="1">Functions in nuclear protein import as an adapter protein for nuclear receptor KPNB1. Binds specifically and directly to substrates containing either a simple or bipartite NLS motif. Docking of the importin/substrate complex to the nuclear pore complex (NPC) is mediated by KPNB1 through binding to nucleoporin FxFG repeats and the complex is subsequently translocated through the pore by an energy requiring, Ran-dependent mechanism. At the nucleoplasmic side of the NPC, Ran binds to importin-beta and the three components separate and importin-alpha and -beta are re-exported from the nucleus to the cytoplasm where GTP hydrolysis releases Ran from importin. The directionality of nuclear import is thought to be conferred by an asymmetric distribution of the GTP- and GDP-bound forms of Ran between the cytoplasm and nucleus. Mediates nuclear import of AARS1, MRTFA and RANBP3.</text>
</comment>
<comment type="subunit">
    <text evidence="1 3">Forms a complex with importin subunit beta-1 (KPNB1). Interacts with SNAI1 (By similarity). Interacts with TALDO1 isoform 1 (PubMed:27703206). Interacts with CYB1 (By similarity).</text>
</comment>
<comment type="interaction">
    <interactant intactId="EBI-8372758">
        <id>O35343</id>
    </interactant>
    <interactant intactId="EBI-744603">
        <id>Q15637</id>
        <label>SF1</label>
    </interactant>
    <organismsDiffer>true</organismsDiffer>
    <experiments>3</experiments>
</comment>
<comment type="subcellular location">
    <subcellularLocation>
        <location evidence="1">Cytoplasm</location>
    </subcellularLocation>
    <subcellularLocation>
        <location evidence="1">Nucleus</location>
    </subcellularLocation>
</comment>
<comment type="tissue specificity">
    <text evidence="4">Detected more or less in all tissues examined (Ehrlich ascites tumor cells, testis, kidney, spleen, liver, heart, lung, thymus, skeletal muscle, cerebellum and brain (without cerebellum)). Multiple-sized transcripts were highly expressed, especially in testis.</text>
</comment>
<comment type="domain">
    <text evidence="1">Consists of an N-terminal hydrophilic region, a hydrophobic central region composed of 10 repeats, and a short hydrophilic C-terminus. The N-terminal hydrophilic region contains the importin beta binding domain (IBB domain), which is sufficient for binding importin beta and essential for nuclear protein import.</text>
</comment>
<comment type="domain">
    <text evidence="1">The IBB domain is thought to act as an intrasteric autoregulatory sequence by interacting with the internal autoinhibitory NLS. Binding of KPNB1 probably overlaps the internal NLS and contributes to a high affinity for cytoplasmic NLS-containing cargo substrates. After dissociation of the importin/substrate complex in the nucleus the internal autohibitory NLS contributes to a low affinity for nuclear NLS-containing proteins.</text>
</comment>
<comment type="domain">
    <text evidence="1">The major and minor NLS binding sites are mainly involved in recognition of simple or bipartite NLS motifs. Structurally located within in a helical surface groove they contain several conserved Trp and Asn residues of the corresponding third helices (H3) of ARM repeats which mainly contribute to binding.</text>
</comment>
<comment type="similarity">
    <text evidence="5">Belongs to the importin alpha family.</text>
</comment>
<organism>
    <name type="scientific">Mus musculus</name>
    <name type="common">Mouse</name>
    <dbReference type="NCBI Taxonomy" id="10090"/>
    <lineage>
        <taxon>Eukaryota</taxon>
        <taxon>Metazoa</taxon>
        <taxon>Chordata</taxon>
        <taxon>Craniata</taxon>
        <taxon>Vertebrata</taxon>
        <taxon>Euteleostomi</taxon>
        <taxon>Mammalia</taxon>
        <taxon>Eutheria</taxon>
        <taxon>Euarchontoglires</taxon>
        <taxon>Glires</taxon>
        <taxon>Rodentia</taxon>
        <taxon>Myomorpha</taxon>
        <taxon>Muroidea</taxon>
        <taxon>Muridae</taxon>
        <taxon>Murinae</taxon>
        <taxon>Mus</taxon>
        <taxon>Mus</taxon>
    </lineage>
</organism>
<dbReference type="EMBL" id="AF020771">
    <property type="protein sequence ID" value="AAC53371.1"/>
    <property type="molecule type" value="mRNA"/>
</dbReference>
<dbReference type="EMBL" id="BC026821">
    <property type="protein sequence ID" value="AAH26821.1"/>
    <property type="molecule type" value="mRNA"/>
</dbReference>
<dbReference type="EMBL" id="BC052162">
    <property type="protein sequence ID" value="AAH52162.1"/>
    <property type="molecule type" value="mRNA"/>
</dbReference>
<dbReference type="CCDS" id="CCDS17403.1"/>
<dbReference type="RefSeq" id="NP_032493.1">
    <property type="nucleotide sequence ID" value="NM_008467.4"/>
</dbReference>
<dbReference type="SMR" id="O35343"/>
<dbReference type="BioGRID" id="201009">
    <property type="interactions" value="22"/>
</dbReference>
<dbReference type="ComplexPortal" id="CPX-1061">
    <property type="entry name" value="Importin complex, KPNA4 variant"/>
</dbReference>
<dbReference type="DIP" id="DIP-62053N"/>
<dbReference type="FunCoup" id="O35343">
    <property type="interactions" value="4180"/>
</dbReference>
<dbReference type="IntAct" id="O35343">
    <property type="interactions" value="6"/>
</dbReference>
<dbReference type="MINT" id="O35343"/>
<dbReference type="STRING" id="10090.ENSMUSP00000141227"/>
<dbReference type="GlyGen" id="O35343">
    <property type="glycosylation" value="1 site, 1 O-linked glycan (1 site)"/>
</dbReference>
<dbReference type="iPTMnet" id="O35343"/>
<dbReference type="PhosphoSitePlus" id="O35343"/>
<dbReference type="SwissPalm" id="O35343"/>
<dbReference type="jPOST" id="O35343"/>
<dbReference type="PaxDb" id="10090-ENSMUSP00000029353"/>
<dbReference type="PeptideAtlas" id="O35343"/>
<dbReference type="ProteomicsDB" id="269552"/>
<dbReference type="Pumba" id="O35343"/>
<dbReference type="Antibodypedia" id="18521">
    <property type="antibodies" value="339 antibodies from 39 providers"/>
</dbReference>
<dbReference type="DNASU" id="16649"/>
<dbReference type="Ensembl" id="ENSMUST00000194558.6">
    <property type="protein sequence ID" value="ENSMUSP00000141227.2"/>
    <property type="gene ID" value="ENSMUSG00000027782.11"/>
</dbReference>
<dbReference type="GeneID" id="16649"/>
<dbReference type="KEGG" id="mmu:16649"/>
<dbReference type="UCSC" id="uc008pme.1">
    <property type="organism name" value="mouse"/>
</dbReference>
<dbReference type="AGR" id="MGI:1100848"/>
<dbReference type="CTD" id="3840"/>
<dbReference type="MGI" id="MGI:1100848">
    <property type="gene designation" value="Kpna4"/>
</dbReference>
<dbReference type="VEuPathDB" id="HostDB:ENSMUSG00000027782"/>
<dbReference type="eggNOG" id="KOG0166">
    <property type="taxonomic scope" value="Eukaryota"/>
</dbReference>
<dbReference type="GeneTree" id="ENSGT01050000244891"/>
<dbReference type="HOGENOM" id="CLU_018084_6_1_1"/>
<dbReference type="InParanoid" id="O35343"/>
<dbReference type="OMA" id="IPRDGFN"/>
<dbReference type="OrthoDB" id="22764at9989"/>
<dbReference type="PhylomeDB" id="O35343"/>
<dbReference type="TreeFam" id="TF101178"/>
<dbReference type="BioGRID-ORCS" id="16649">
    <property type="hits" value="4 hits in 76 CRISPR screens"/>
</dbReference>
<dbReference type="ChiTaRS" id="Kpna4">
    <property type="organism name" value="mouse"/>
</dbReference>
<dbReference type="PRO" id="PR:O35343"/>
<dbReference type="Proteomes" id="UP000000589">
    <property type="component" value="Chromosome 3"/>
</dbReference>
<dbReference type="RNAct" id="O35343">
    <property type="molecule type" value="protein"/>
</dbReference>
<dbReference type="Bgee" id="ENSMUSG00000027782">
    <property type="expression patterns" value="Expressed in placenta labyrinth and 259 other cell types or tissues"/>
</dbReference>
<dbReference type="ExpressionAtlas" id="O35343">
    <property type="expression patterns" value="baseline and differential"/>
</dbReference>
<dbReference type="GO" id="GO:0005829">
    <property type="term" value="C:cytosol"/>
    <property type="evidence" value="ECO:0000303"/>
    <property type="project" value="ComplexPortal"/>
</dbReference>
<dbReference type="GO" id="GO:0001673">
    <property type="term" value="C:male germ cell nucleus"/>
    <property type="evidence" value="ECO:0000314"/>
    <property type="project" value="MGI"/>
</dbReference>
<dbReference type="GO" id="GO:0042564">
    <property type="term" value="C:NLS-dependent protein nuclear import complex"/>
    <property type="evidence" value="ECO:0000266"/>
    <property type="project" value="ComplexPortal"/>
</dbReference>
<dbReference type="GO" id="GO:0031965">
    <property type="term" value="C:nuclear membrane"/>
    <property type="evidence" value="ECO:0007669"/>
    <property type="project" value="Ensembl"/>
</dbReference>
<dbReference type="GO" id="GO:0005643">
    <property type="term" value="C:nuclear pore"/>
    <property type="evidence" value="ECO:0007669"/>
    <property type="project" value="Ensembl"/>
</dbReference>
<dbReference type="GO" id="GO:0005654">
    <property type="term" value="C:nucleoplasm"/>
    <property type="evidence" value="ECO:0000303"/>
    <property type="project" value="ComplexPortal"/>
</dbReference>
<dbReference type="GO" id="GO:0061608">
    <property type="term" value="F:nuclear import signal receptor activity"/>
    <property type="evidence" value="ECO:0000314"/>
    <property type="project" value="MGI"/>
</dbReference>
<dbReference type="GO" id="GO:0008139">
    <property type="term" value="F:nuclear localization sequence binding"/>
    <property type="evidence" value="ECO:0007669"/>
    <property type="project" value="Ensembl"/>
</dbReference>
<dbReference type="GO" id="GO:0014046">
    <property type="term" value="P:dopamine secretion"/>
    <property type="evidence" value="ECO:0007669"/>
    <property type="project" value="Ensembl"/>
</dbReference>
<dbReference type="GO" id="GO:0010467">
    <property type="term" value="P:gene expression"/>
    <property type="evidence" value="ECO:0007669"/>
    <property type="project" value="Ensembl"/>
</dbReference>
<dbReference type="GO" id="GO:0006607">
    <property type="term" value="P:NLS-bearing protein import into nucleus"/>
    <property type="evidence" value="ECO:0007669"/>
    <property type="project" value="Ensembl"/>
</dbReference>
<dbReference type="GO" id="GO:0006606">
    <property type="term" value="P:protein import into nucleus"/>
    <property type="evidence" value="ECO:0000314"/>
    <property type="project" value="MGI"/>
</dbReference>
<dbReference type="GO" id="GO:0042542">
    <property type="term" value="P:response to hydrogen peroxide"/>
    <property type="evidence" value="ECO:0000315"/>
    <property type="project" value="MGI"/>
</dbReference>
<dbReference type="FunFam" id="1.20.5.690:FF:000004">
    <property type="entry name" value="Importin subunit alpha"/>
    <property type="match status" value="1"/>
</dbReference>
<dbReference type="FunFam" id="1.25.10.10:FF:000009">
    <property type="entry name" value="Importin subunit alpha"/>
    <property type="match status" value="1"/>
</dbReference>
<dbReference type="Gene3D" id="1.20.5.690">
    <property type="entry name" value="Importin-alpha, importin-beta-binding domain"/>
    <property type="match status" value="1"/>
</dbReference>
<dbReference type="Gene3D" id="1.25.10.10">
    <property type="entry name" value="Leucine-rich Repeat Variant"/>
    <property type="match status" value="1"/>
</dbReference>
<dbReference type="InterPro" id="IPR011989">
    <property type="entry name" value="ARM-like"/>
</dbReference>
<dbReference type="InterPro" id="IPR016024">
    <property type="entry name" value="ARM-type_fold"/>
</dbReference>
<dbReference type="InterPro" id="IPR032413">
    <property type="entry name" value="Arm_3"/>
</dbReference>
<dbReference type="InterPro" id="IPR000225">
    <property type="entry name" value="Armadillo"/>
</dbReference>
<dbReference type="InterPro" id="IPR002652">
    <property type="entry name" value="Importin-a_IBB"/>
</dbReference>
<dbReference type="InterPro" id="IPR036975">
    <property type="entry name" value="Importin-a_IBB_sf"/>
</dbReference>
<dbReference type="InterPro" id="IPR024931">
    <property type="entry name" value="Importin_alpha"/>
</dbReference>
<dbReference type="PANTHER" id="PTHR23316">
    <property type="entry name" value="IMPORTIN ALPHA"/>
    <property type="match status" value="1"/>
</dbReference>
<dbReference type="Pfam" id="PF00514">
    <property type="entry name" value="Arm"/>
    <property type="match status" value="8"/>
</dbReference>
<dbReference type="Pfam" id="PF16186">
    <property type="entry name" value="Arm_3"/>
    <property type="match status" value="1"/>
</dbReference>
<dbReference type="Pfam" id="PF01749">
    <property type="entry name" value="IBB"/>
    <property type="match status" value="1"/>
</dbReference>
<dbReference type="PIRSF" id="PIRSF005673">
    <property type="entry name" value="Importin_alpha"/>
    <property type="match status" value="1"/>
</dbReference>
<dbReference type="SMART" id="SM00185">
    <property type="entry name" value="ARM"/>
    <property type="match status" value="8"/>
</dbReference>
<dbReference type="SUPFAM" id="SSF48371">
    <property type="entry name" value="ARM repeat"/>
    <property type="match status" value="1"/>
</dbReference>
<dbReference type="PROSITE" id="PS50176">
    <property type="entry name" value="ARM_REPEAT"/>
    <property type="match status" value="3"/>
</dbReference>
<dbReference type="PROSITE" id="PS51214">
    <property type="entry name" value="IBB"/>
    <property type="match status" value="1"/>
</dbReference>